<evidence type="ECO:0000255" key="1">
    <source>
        <dbReference type="HAMAP-Rule" id="MF_01367"/>
    </source>
</evidence>
<evidence type="ECO:0000305" key="2"/>
<keyword id="KW-0687">Ribonucleoprotein</keyword>
<keyword id="KW-0689">Ribosomal protein</keyword>
<keyword id="KW-0694">RNA-binding</keyword>
<keyword id="KW-0699">rRNA-binding</keyword>
<organism>
    <name type="scientific">Rickettsia africae (strain ESF-5)</name>
    <dbReference type="NCBI Taxonomy" id="347255"/>
    <lineage>
        <taxon>Bacteria</taxon>
        <taxon>Pseudomonadati</taxon>
        <taxon>Pseudomonadota</taxon>
        <taxon>Alphaproteobacteria</taxon>
        <taxon>Rickettsiales</taxon>
        <taxon>Rickettsiaceae</taxon>
        <taxon>Rickettsieae</taxon>
        <taxon>Rickettsia</taxon>
        <taxon>spotted fever group</taxon>
    </lineage>
</organism>
<accession>C3PP97</accession>
<reference key="1">
    <citation type="journal article" date="2009" name="BMC Genomics">
        <title>Analysis of the Rickettsia africae genome reveals that virulence acquisition in Rickettsia species may be explained by genome reduction.</title>
        <authorList>
            <person name="Fournier P.-E."/>
            <person name="El Karkouri K."/>
            <person name="Leroy Q."/>
            <person name="Robert C."/>
            <person name="Giumelli B."/>
            <person name="Renesto P."/>
            <person name="Socolovschi C."/>
            <person name="Parola P."/>
            <person name="Audic S."/>
            <person name="Raoult D."/>
        </authorList>
    </citation>
    <scope>NUCLEOTIDE SEQUENCE [LARGE SCALE GENOMIC DNA]</scope>
    <source>
        <strain>ESF-5</strain>
    </source>
</reference>
<feature type="chain" id="PRO_1000214990" description="Large ribosomal subunit protein uL14">
    <location>
        <begin position="1"/>
        <end position="122"/>
    </location>
</feature>
<protein>
    <recommendedName>
        <fullName evidence="1">Large ribosomal subunit protein uL14</fullName>
    </recommendedName>
    <alternativeName>
        <fullName evidence="2">50S ribosomal protein L14</fullName>
    </alternativeName>
</protein>
<dbReference type="EMBL" id="CP001612">
    <property type="protein sequence ID" value="ACP53757.1"/>
    <property type="molecule type" value="Genomic_DNA"/>
</dbReference>
<dbReference type="RefSeq" id="WP_004997813.1">
    <property type="nucleotide sequence ID" value="NC_012633.1"/>
</dbReference>
<dbReference type="SMR" id="C3PP97"/>
<dbReference type="GeneID" id="95361476"/>
<dbReference type="KEGG" id="raf:RAF_ORF0902"/>
<dbReference type="HOGENOM" id="CLU_095071_2_1_5"/>
<dbReference type="Proteomes" id="UP000002305">
    <property type="component" value="Chromosome"/>
</dbReference>
<dbReference type="GO" id="GO:0022625">
    <property type="term" value="C:cytosolic large ribosomal subunit"/>
    <property type="evidence" value="ECO:0007669"/>
    <property type="project" value="TreeGrafter"/>
</dbReference>
<dbReference type="GO" id="GO:0070180">
    <property type="term" value="F:large ribosomal subunit rRNA binding"/>
    <property type="evidence" value="ECO:0007669"/>
    <property type="project" value="TreeGrafter"/>
</dbReference>
<dbReference type="GO" id="GO:0003735">
    <property type="term" value="F:structural constituent of ribosome"/>
    <property type="evidence" value="ECO:0007669"/>
    <property type="project" value="InterPro"/>
</dbReference>
<dbReference type="GO" id="GO:0006412">
    <property type="term" value="P:translation"/>
    <property type="evidence" value="ECO:0007669"/>
    <property type="project" value="UniProtKB-UniRule"/>
</dbReference>
<dbReference type="CDD" id="cd00337">
    <property type="entry name" value="Ribosomal_uL14"/>
    <property type="match status" value="1"/>
</dbReference>
<dbReference type="FunFam" id="2.40.150.20:FF:000001">
    <property type="entry name" value="50S ribosomal protein L14"/>
    <property type="match status" value="1"/>
</dbReference>
<dbReference type="Gene3D" id="2.40.150.20">
    <property type="entry name" value="Ribosomal protein L14"/>
    <property type="match status" value="1"/>
</dbReference>
<dbReference type="HAMAP" id="MF_01367">
    <property type="entry name" value="Ribosomal_uL14"/>
    <property type="match status" value="1"/>
</dbReference>
<dbReference type="InterPro" id="IPR000218">
    <property type="entry name" value="Ribosomal_uL14"/>
</dbReference>
<dbReference type="InterPro" id="IPR005745">
    <property type="entry name" value="Ribosomal_uL14_bac-type"/>
</dbReference>
<dbReference type="InterPro" id="IPR019972">
    <property type="entry name" value="Ribosomal_uL14_CS"/>
</dbReference>
<dbReference type="InterPro" id="IPR036853">
    <property type="entry name" value="Ribosomal_uL14_sf"/>
</dbReference>
<dbReference type="NCBIfam" id="TIGR01067">
    <property type="entry name" value="rplN_bact"/>
    <property type="match status" value="1"/>
</dbReference>
<dbReference type="PANTHER" id="PTHR11761">
    <property type="entry name" value="50S/60S RIBOSOMAL PROTEIN L14/L23"/>
    <property type="match status" value="1"/>
</dbReference>
<dbReference type="PANTHER" id="PTHR11761:SF3">
    <property type="entry name" value="LARGE RIBOSOMAL SUBUNIT PROTEIN UL14M"/>
    <property type="match status" value="1"/>
</dbReference>
<dbReference type="Pfam" id="PF00238">
    <property type="entry name" value="Ribosomal_L14"/>
    <property type="match status" value="1"/>
</dbReference>
<dbReference type="SMART" id="SM01374">
    <property type="entry name" value="Ribosomal_L14"/>
    <property type="match status" value="1"/>
</dbReference>
<dbReference type="SUPFAM" id="SSF50193">
    <property type="entry name" value="Ribosomal protein L14"/>
    <property type="match status" value="1"/>
</dbReference>
<dbReference type="PROSITE" id="PS00049">
    <property type="entry name" value="RIBOSOMAL_L14"/>
    <property type="match status" value="1"/>
</dbReference>
<comment type="function">
    <text evidence="1">Binds to 23S rRNA. Forms part of two intersubunit bridges in the 70S ribosome.</text>
</comment>
<comment type="subunit">
    <text evidence="1">Part of the 50S ribosomal subunit. Forms a cluster with proteins L3 and L19. In the 70S ribosome, L14 and L19 interact and together make contacts with the 16S rRNA in bridges B5 and B8.</text>
</comment>
<comment type="similarity">
    <text evidence="1">Belongs to the universal ribosomal protein uL14 family.</text>
</comment>
<gene>
    <name evidence="1" type="primary">rplN</name>
    <name type="ordered locus">RAF_ORF0902</name>
</gene>
<proteinExistence type="inferred from homology"/>
<sequence length="122" mass="13229">MIQMQSILEVADNSGAKKVMCIKVLGGSHHMVAKLGDVIVVSVKDAIPGGKVKKGDVYKGVIVRTKTGVVRPDGSTIKFDQNALVLLNKQDEPIGTRVFGPVTRELRAKKYVRIMSLAEEVL</sequence>
<name>RL14_RICAE</name>